<sequence length="130" mass="14580">MTLLDPLANALSHITNSERVGKKEVYIKPASKLIGEVLRVMLENGYIGEFELIDDGRAGIYRVQLIGKINKAGAIKPRFPVKARDYEKWEKRFLPAFEFGILIVSTSQGVMTHKEALEKGIGGRLIAYVY</sequence>
<keyword id="KW-0002">3D-structure</keyword>
<keyword id="KW-1185">Reference proteome</keyword>
<keyword id="KW-0687">Ribonucleoprotein</keyword>
<keyword id="KW-0689">Ribosomal protein</keyword>
<keyword id="KW-0694">RNA-binding</keyword>
<keyword id="KW-0699">rRNA-binding</keyword>
<comment type="function">
    <text evidence="1">One of the primary rRNA binding proteins, it binds directly to 16S rRNA central domain where it helps coordinate assembly of the platform of the 30S subunit.</text>
</comment>
<comment type="subunit">
    <text evidence="1 2">Part of the 30S ribosomal subunit.</text>
</comment>
<comment type="similarity">
    <text evidence="1">Belongs to the universal ribosomal protein uS8 family.</text>
</comment>
<name>RS8_THEKO</name>
<evidence type="ECO:0000255" key="1">
    <source>
        <dbReference type="HAMAP-Rule" id="MF_01302"/>
    </source>
</evidence>
<evidence type="ECO:0000269" key="2">
    <source>
    </source>
</evidence>
<evidence type="ECO:0000305" key="3"/>
<evidence type="ECO:0007744" key="4">
    <source>
        <dbReference type="PDB" id="6SKF"/>
    </source>
</evidence>
<evidence type="ECO:0007744" key="5">
    <source>
        <dbReference type="PDB" id="6SKG"/>
    </source>
</evidence>
<evidence type="ECO:0007744" key="6">
    <source>
        <dbReference type="PDB" id="6TH6"/>
    </source>
</evidence>
<organism>
    <name type="scientific">Thermococcus kodakarensis (strain ATCC BAA-918 / JCM 12380 / KOD1)</name>
    <name type="common">Pyrococcus kodakaraensis (strain KOD1)</name>
    <dbReference type="NCBI Taxonomy" id="69014"/>
    <lineage>
        <taxon>Archaea</taxon>
        <taxon>Methanobacteriati</taxon>
        <taxon>Methanobacteriota</taxon>
        <taxon>Thermococci</taxon>
        <taxon>Thermococcales</taxon>
        <taxon>Thermococcaceae</taxon>
        <taxon>Thermococcus</taxon>
    </lineage>
</organism>
<gene>
    <name evidence="1" type="primary">rps8</name>
    <name type="ordered locus">TK1526</name>
</gene>
<protein>
    <recommendedName>
        <fullName evidence="1">Small ribosomal subunit protein uS8</fullName>
    </recommendedName>
    <alternativeName>
        <fullName evidence="3">30S ribosomal protein S8</fullName>
    </alternativeName>
</protein>
<accession>Q5JJG3</accession>
<proteinExistence type="evidence at protein level"/>
<feature type="chain" id="PRO_0000126551" description="Small ribosomal subunit protein uS8">
    <location>
        <begin position="1"/>
        <end position="130"/>
    </location>
</feature>
<dbReference type="EMBL" id="AP006878">
    <property type="protein sequence ID" value="BAD85715.1"/>
    <property type="molecule type" value="Genomic_DNA"/>
</dbReference>
<dbReference type="RefSeq" id="WP_011250477.1">
    <property type="nucleotide sequence ID" value="NC_006624.1"/>
</dbReference>
<dbReference type="PDB" id="6SKF">
    <property type="method" value="EM"/>
    <property type="resolution" value="2.95 A"/>
    <property type="chains" value="Aj=1-130"/>
</dbReference>
<dbReference type="PDB" id="6SKG">
    <property type="method" value="EM"/>
    <property type="resolution" value="2.65 A"/>
    <property type="chains" value="Aj=1-130"/>
</dbReference>
<dbReference type="PDB" id="6TH6">
    <property type="method" value="EM"/>
    <property type="resolution" value="2.55 A"/>
    <property type="chains" value="Aj=1-130"/>
</dbReference>
<dbReference type="PDBsum" id="6SKF"/>
<dbReference type="PDBsum" id="6SKG"/>
<dbReference type="PDBsum" id="6TH6"/>
<dbReference type="EMDB" id="EMD-10223"/>
<dbReference type="EMDB" id="EMD-10224"/>
<dbReference type="EMDB" id="EMD-10503"/>
<dbReference type="SMR" id="Q5JJG3"/>
<dbReference type="FunCoup" id="Q5JJG3">
    <property type="interactions" value="154"/>
</dbReference>
<dbReference type="IntAct" id="Q5JJG3">
    <property type="interactions" value="1"/>
</dbReference>
<dbReference type="MINT" id="Q5JJG3"/>
<dbReference type="STRING" id="69014.TK1526"/>
<dbReference type="EnsemblBacteria" id="BAD85715">
    <property type="protein sequence ID" value="BAD85715"/>
    <property type="gene ID" value="TK1526"/>
</dbReference>
<dbReference type="GeneID" id="78448054"/>
<dbReference type="KEGG" id="tko:TK1526"/>
<dbReference type="PATRIC" id="fig|69014.16.peg.1486"/>
<dbReference type="eggNOG" id="arCOG04091">
    <property type="taxonomic scope" value="Archaea"/>
</dbReference>
<dbReference type="HOGENOM" id="CLU_098428_1_1_2"/>
<dbReference type="InParanoid" id="Q5JJG3"/>
<dbReference type="OrthoDB" id="5670at2157"/>
<dbReference type="PhylomeDB" id="Q5JJG3"/>
<dbReference type="Proteomes" id="UP000000536">
    <property type="component" value="Chromosome"/>
</dbReference>
<dbReference type="GO" id="GO:0022627">
    <property type="term" value="C:cytosolic small ribosomal subunit"/>
    <property type="evidence" value="ECO:0000318"/>
    <property type="project" value="GO_Central"/>
</dbReference>
<dbReference type="GO" id="GO:0019843">
    <property type="term" value="F:rRNA binding"/>
    <property type="evidence" value="ECO:0007669"/>
    <property type="project" value="UniProtKB-UniRule"/>
</dbReference>
<dbReference type="GO" id="GO:0003735">
    <property type="term" value="F:structural constituent of ribosome"/>
    <property type="evidence" value="ECO:0000318"/>
    <property type="project" value="GO_Central"/>
</dbReference>
<dbReference type="GO" id="GO:0006412">
    <property type="term" value="P:translation"/>
    <property type="evidence" value="ECO:0007669"/>
    <property type="project" value="UniProtKB-UniRule"/>
</dbReference>
<dbReference type="FunFam" id="3.30.1370.30:FF:000001">
    <property type="entry name" value="40S ribosomal protein S15a"/>
    <property type="match status" value="1"/>
</dbReference>
<dbReference type="FunFam" id="3.30.1490.10:FF:000002">
    <property type="entry name" value="40S ribosomal protein S15a"/>
    <property type="match status" value="1"/>
</dbReference>
<dbReference type="Gene3D" id="3.30.1370.30">
    <property type="match status" value="1"/>
</dbReference>
<dbReference type="Gene3D" id="3.30.1490.10">
    <property type="match status" value="1"/>
</dbReference>
<dbReference type="HAMAP" id="MF_01302_A">
    <property type="entry name" value="Ribosomal_uS8_A"/>
    <property type="match status" value="1"/>
</dbReference>
<dbReference type="InterPro" id="IPR000630">
    <property type="entry name" value="Ribosomal_uS8"/>
</dbReference>
<dbReference type="InterPro" id="IPR047863">
    <property type="entry name" value="Ribosomal_uS8_CS"/>
</dbReference>
<dbReference type="InterPro" id="IPR035987">
    <property type="entry name" value="Ribosomal_uS8_sf"/>
</dbReference>
<dbReference type="NCBIfam" id="NF003115">
    <property type="entry name" value="PRK04034.1"/>
    <property type="match status" value="1"/>
</dbReference>
<dbReference type="PANTHER" id="PTHR11758">
    <property type="entry name" value="40S RIBOSOMAL PROTEIN S15A"/>
    <property type="match status" value="1"/>
</dbReference>
<dbReference type="Pfam" id="PF00410">
    <property type="entry name" value="Ribosomal_S8"/>
    <property type="match status" value="1"/>
</dbReference>
<dbReference type="SUPFAM" id="SSF56047">
    <property type="entry name" value="Ribosomal protein S8"/>
    <property type="match status" value="1"/>
</dbReference>
<dbReference type="PROSITE" id="PS00053">
    <property type="entry name" value="RIBOSOMAL_S8"/>
    <property type="match status" value="1"/>
</dbReference>
<reference key="1">
    <citation type="journal article" date="2005" name="Genome Res.">
        <title>Complete genome sequence of the hyperthermophilic archaeon Thermococcus kodakaraensis KOD1 and comparison with Pyrococcus genomes.</title>
        <authorList>
            <person name="Fukui T."/>
            <person name="Atomi H."/>
            <person name="Kanai T."/>
            <person name="Matsumi R."/>
            <person name="Fujiwara S."/>
            <person name="Imanaka T."/>
        </authorList>
    </citation>
    <scope>NUCLEOTIDE SEQUENCE [LARGE SCALE GENOMIC DNA]</scope>
    <source>
        <strain>ATCC BAA-918 / JCM 12380 / KOD1</strain>
    </source>
</reference>
<reference evidence="4 5 6" key="2">
    <citation type="journal article" date="2020" name="Nature">
        <title>Dynamic RNA acetylation revealed by quantitative cross-evolutionary mapping.</title>
        <authorList>
            <person name="Sas-Chen A."/>
            <person name="Thomas J.M."/>
            <person name="Matzov D."/>
            <person name="Taoka M."/>
            <person name="Nance K.D."/>
            <person name="Nir R."/>
            <person name="Bryson K.M."/>
            <person name="Shachar R."/>
            <person name="Liman G.L.S."/>
            <person name="Burkhart B.W."/>
            <person name="Gamage S.T."/>
            <person name="Nobe Y."/>
            <person name="Briney C.A."/>
            <person name="Levy M.J."/>
            <person name="Fuchs R.T."/>
            <person name="Robb G.B."/>
            <person name="Hartmann J."/>
            <person name="Sharma S."/>
            <person name="Lin Q."/>
            <person name="Florens L."/>
            <person name="Washburn M.P."/>
            <person name="Isobe T."/>
            <person name="Santangelo T.J."/>
            <person name="Shalev-Benami M."/>
            <person name="Meier J.L."/>
            <person name="Schwartz S."/>
        </authorList>
    </citation>
    <scope>STRUCTURE BY ELECTRON MICROSCOPY (2.55 ANGSTROMS) IN 70S RIBOSOME</scope>
    <scope>SUBUNIT</scope>
    <source>
        <strain>ATCC BAA-918 / TS559</strain>
    </source>
</reference>